<evidence type="ECO:0000255" key="1"/>
<evidence type="ECO:0000269" key="2">
    <source>
    </source>
</evidence>
<evidence type="ECO:0000303" key="3">
    <source>
    </source>
</evidence>
<evidence type="ECO:0000305" key="4"/>
<evidence type="ECO:0000305" key="5">
    <source>
    </source>
</evidence>
<name>SFI2_PHYIT</name>
<dbReference type="EMBL" id="DS028122">
    <property type="protein sequence ID" value="EEY67199.1"/>
    <property type="molecule type" value="Genomic_DNA"/>
</dbReference>
<dbReference type="RefSeq" id="XP_002905847.1">
    <property type="nucleotide sequence ID" value="XM_002905801.1"/>
</dbReference>
<dbReference type="STRING" id="403677.D0N0N6"/>
<dbReference type="EnsemblProtists" id="PITG_04145T0">
    <property type="protein sequence ID" value="PITG_04145T0"/>
    <property type="gene ID" value="PITG_04145"/>
</dbReference>
<dbReference type="GeneID" id="9479716"/>
<dbReference type="KEGG" id="pif:PITG_04145"/>
<dbReference type="VEuPathDB" id="FungiDB:PITG_04145"/>
<dbReference type="HOGENOM" id="CLU_126839_0_0_1"/>
<dbReference type="InParanoid" id="D0N0N6"/>
<dbReference type="OrthoDB" id="128949at2759"/>
<dbReference type="Proteomes" id="UP000006643">
    <property type="component" value="Partially assembled WGS sequence"/>
</dbReference>
<dbReference type="GO" id="GO:0005576">
    <property type="term" value="C:extracellular region"/>
    <property type="evidence" value="ECO:0007669"/>
    <property type="project" value="UniProtKB-SubCell"/>
</dbReference>
<dbReference type="GO" id="GO:0042025">
    <property type="term" value="C:host cell nucleus"/>
    <property type="evidence" value="ECO:0007669"/>
    <property type="project" value="UniProtKB-SubCell"/>
</dbReference>
<keyword id="KW-1048">Host nucleus</keyword>
<keyword id="KW-1185">Reference proteome</keyword>
<keyword id="KW-0964">Secreted</keyword>
<keyword id="KW-0732">Signal</keyword>
<keyword id="KW-0843">Virulence</keyword>
<gene>
    <name evidence="3" type="primary">SFI2</name>
    <name type="ORF">PITG_04145</name>
</gene>
<proteinExistence type="inferred from homology"/>
<sequence length="128" mass="13907">MRSAFYIFLVVAVLARCSVVAAFTNADDSQLLSKVSPDFAANDMTYTVSRKRLLRVAGREDDDATTDEEDRGFTSIVDVIKRSDAAEALHKLSKASAKKVKKAGKAVKELTAKEKEALKALLALKDGN</sequence>
<feature type="signal peptide" evidence="1">
    <location>
        <begin position="1"/>
        <end position="22"/>
    </location>
</feature>
<feature type="chain" id="PRO_5003011571" description="RxLR effector protein SFI2">
    <location>
        <begin position="23"/>
        <end position="128"/>
    </location>
</feature>
<feature type="short sequence motif" description="RxLR-dEER" evidence="5">
    <location>
        <begin position="52"/>
        <end position="71"/>
    </location>
</feature>
<organism>
    <name type="scientific">Phytophthora infestans (strain T30-4)</name>
    <name type="common">Potato late blight agent</name>
    <dbReference type="NCBI Taxonomy" id="403677"/>
    <lineage>
        <taxon>Eukaryota</taxon>
        <taxon>Sar</taxon>
        <taxon>Stramenopiles</taxon>
        <taxon>Oomycota</taxon>
        <taxon>Peronosporales</taxon>
        <taxon>Peronosporaceae</taxon>
        <taxon>Phytophthora</taxon>
    </lineage>
</organism>
<comment type="function">
    <text evidence="2">Effector that suppresses flg22-induced post-translational MAP kinase activation both tomato and Arabidopsis. The perception of highly conserved pathogen- or microbe-associated molecular patterns (PAMPs/MAMPs), such as flg22, triggers converging signaling pathways recruiting MAP kinase cascades and inducing transcriptional re-programming, yielding a generic antimicrobial response.</text>
</comment>
<comment type="subcellular location">
    <subcellularLocation>
        <location evidence="2">Secreted</location>
    </subcellularLocation>
    <subcellularLocation>
        <location evidence="2">Host nucleus</location>
    </subcellularLocation>
</comment>
<comment type="domain">
    <text evidence="5">The RxLR-dEER motif acts to carry the protein into the host cell cytoplasm through binding to cell surface phosphatidylinositol-3-phosphate.</text>
</comment>
<comment type="similarity">
    <text evidence="4">Belongs to the RxLR effector family.</text>
</comment>
<protein>
    <recommendedName>
        <fullName evidence="3">RxLR effector protein SFI2</fullName>
    </recommendedName>
    <alternativeName>
        <fullName evidence="3">Suppressor of early Flg22-induced immune response 2</fullName>
    </alternativeName>
</protein>
<accession>D0N0N6</accession>
<reference key="1">
    <citation type="journal article" date="2009" name="Nature">
        <title>Genome sequence and analysis of the Irish potato famine pathogen Phytophthora infestans.</title>
        <authorList>
            <consortium name="The Broad Institute Genome Sequencing Platform"/>
            <person name="Haas B.J."/>
            <person name="Kamoun S."/>
            <person name="Zody M.C."/>
            <person name="Jiang R.H."/>
            <person name="Handsaker R.E."/>
            <person name="Cano L.M."/>
            <person name="Grabherr M."/>
            <person name="Kodira C.D."/>
            <person name="Raffaele S."/>
            <person name="Torto-Alalibo T."/>
            <person name="Bozkurt T.O."/>
            <person name="Ah-Fong A.M."/>
            <person name="Alvarado L."/>
            <person name="Anderson V.L."/>
            <person name="Armstrong M.R."/>
            <person name="Avrova A."/>
            <person name="Baxter L."/>
            <person name="Beynon J."/>
            <person name="Boevink P.C."/>
            <person name="Bollmann S.R."/>
            <person name="Bos J.I."/>
            <person name="Bulone V."/>
            <person name="Cai G."/>
            <person name="Cakir C."/>
            <person name="Carrington J.C."/>
            <person name="Chawner M."/>
            <person name="Conti L."/>
            <person name="Costanzo S."/>
            <person name="Ewan R."/>
            <person name="Fahlgren N."/>
            <person name="Fischbach M.A."/>
            <person name="Fugelstad J."/>
            <person name="Gilroy E.M."/>
            <person name="Gnerre S."/>
            <person name="Green P.J."/>
            <person name="Grenville-Briggs L.J."/>
            <person name="Griffith J."/>
            <person name="Grunwald N.J."/>
            <person name="Horn K."/>
            <person name="Horner N.R."/>
            <person name="Hu C.H."/>
            <person name="Huitema E."/>
            <person name="Jeong D.H."/>
            <person name="Jones A.M."/>
            <person name="Jones J.D."/>
            <person name="Jones R.W."/>
            <person name="Karlsson E.K."/>
            <person name="Kunjeti S.G."/>
            <person name="Lamour K."/>
            <person name="Liu Z."/>
            <person name="Ma L."/>
            <person name="Maclean D."/>
            <person name="Chibucos M.C."/>
            <person name="McDonald H."/>
            <person name="McWalters J."/>
            <person name="Meijer H.J."/>
            <person name="Morgan W."/>
            <person name="Morris P.F."/>
            <person name="Munro C.A."/>
            <person name="O'Neill K."/>
            <person name="Ospina-Giraldo M."/>
            <person name="Pinzon A."/>
            <person name="Pritchard L."/>
            <person name="Ramsahoye B."/>
            <person name="Ren Q."/>
            <person name="Restrepo S."/>
            <person name="Roy S."/>
            <person name="Sadanandom A."/>
            <person name="Savidor A."/>
            <person name="Schornack S."/>
            <person name="Schwartz D.C."/>
            <person name="Schumann U.D."/>
            <person name="Schwessinger B."/>
            <person name="Seyer L."/>
            <person name="Sharpe T."/>
            <person name="Silvar C."/>
            <person name="Song J."/>
            <person name="Studholme D.J."/>
            <person name="Sykes S."/>
            <person name="Thines M."/>
            <person name="van de Vondervoort P.J."/>
            <person name="Phuntumart V."/>
            <person name="Wawra S."/>
            <person name="Weide R."/>
            <person name="Win J."/>
            <person name="Young C."/>
            <person name="Zhou S."/>
            <person name="Fry W."/>
            <person name="Meyers B.C."/>
            <person name="van West P."/>
            <person name="Ristaino J."/>
            <person name="Govers F."/>
            <person name="Birch P.R."/>
            <person name="Whisson S.C."/>
            <person name="Judelson H.S."/>
            <person name="Nusbaum C."/>
        </authorList>
    </citation>
    <scope>NUCLEOTIDE SEQUENCE [LARGE SCALE GENOMIC DNA]</scope>
    <source>
        <strain>T30-4</strain>
    </source>
</reference>
<reference key="2">
    <citation type="journal article" date="2014" name="PLoS Pathog.">
        <title>Functionally redundant RXLR effectors from Phytophthora infestans act at different steps to suppress early flg22-triggered immunity.</title>
        <authorList>
            <person name="Zheng X."/>
            <person name="McLellan H."/>
            <person name="Fraiture M."/>
            <person name="Liu X."/>
            <person name="Boevink P.C."/>
            <person name="Gilroy E.M."/>
            <person name="Chen Y."/>
            <person name="Kandel K."/>
            <person name="Sessa G."/>
            <person name="Birch P.R."/>
            <person name="Brunner F."/>
        </authorList>
    </citation>
    <scope>FUNCTION</scope>
    <scope>SUBCELLULAR LOCATION</scope>
</reference>